<evidence type="ECO:0000255" key="1">
    <source>
        <dbReference type="HAMAP-Rule" id="MF_01627"/>
    </source>
</evidence>
<evidence type="ECO:0000269" key="2">
    <source>
    </source>
</evidence>
<evidence type="ECO:0000269" key="3">
    <source>
    </source>
</evidence>
<evidence type="ECO:0000269" key="4">
    <source>
    </source>
</evidence>
<evidence type="ECO:0000269" key="5">
    <source>
    </source>
</evidence>
<evidence type="ECO:0000269" key="6">
    <source>
    </source>
</evidence>
<evidence type="ECO:0000269" key="7">
    <source>
    </source>
</evidence>
<evidence type="ECO:0000269" key="8">
    <source>
    </source>
</evidence>
<evidence type="ECO:0000305" key="9"/>
<evidence type="ECO:0000305" key="10">
    <source>
    </source>
</evidence>
<evidence type="ECO:0000305" key="11">
    <source>
    </source>
</evidence>
<evidence type="ECO:0000305" key="12">
    <source>
    </source>
</evidence>
<evidence type="ECO:0007744" key="13">
    <source>
        <dbReference type="PDB" id="1K9S"/>
    </source>
</evidence>
<evidence type="ECO:0007744" key="14">
    <source>
        <dbReference type="PDB" id="3ONV"/>
    </source>
</evidence>
<evidence type="ECO:0007744" key="15">
    <source>
        <dbReference type="PDB" id="3OOE"/>
    </source>
</evidence>
<evidence type="ECO:0007744" key="16">
    <source>
        <dbReference type="PDB" id="3OOH"/>
    </source>
</evidence>
<evidence type="ECO:0007744" key="17">
    <source>
        <dbReference type="PDB" id="3OPV"/>
    </source>
</evidence>
<evidence type="ECO:0007744" key="18">
    <source>
        <dbReference type="PDB" id="4TS3"/>
    </source>
</evidence>
<evidence type="ECO:0007744" key="19">
    <source>
        <dbReference type="PDB" id="4TS9"/>
    </source>
</evidence>
<evidence type="ECO:0007744" key="20">
    <source>
        <dbReference type="PDB" id="4TTA"/>
    </source>
</evidence>
<evidence type="ECO:0007744" key="21">
    <source>
        <dbReference type="PDB" id="4TTI"/>
    </source>
</evidence>
<evidence type="ECO:0007744" key="22">
    <source>
        <dbReference type="PDB" id="4TTJ"/>
    </source>
</evidence>
<evidence type="ECO:0007829" key="23">
    <source>
        <dbReference type="PDB" id="3OOH"/>
    </source>
</evidence>
<evidence type="ECO:0007829" key="24">
    <source>
        <dbReference type="PDB" id="4TS9"/>
    </source>
</evidence>
<evidence type="ECO:0007829" key="25">
    <source>
        <dbReference type="PDB" id="6XZ2"/>
    </source>
</evidence>
<keyword id="KW-0002">3D-structure</keyword>
<keyword id="KW-0007">Acetylation</keyword>
<keyword id="KW-0903">Direct protein sequencing</keyword>
<keyword id="KW-0328">Glycosyltransferase</keyword>
<keyword id="KW-1185">Reference proteome</keyword>
<keyword id="KW-0808">Transferase</keyword>
<comment type="function">
    <text evidence="2 4 5 6 11">Catalyzes the reversible phosphorolytic breakdown of the N-glycosidic bond in the beta-(deoxy)ribonucleoside molecules, with the formation of the corresponding free purine bases and pentose-1-phosphate (PubMed:11786017, PubMed:21672603, PubMed:235429, PubMed:30337572). Acts on 6-amino and 6-oxopurines including deoxyinosine, deoxyguanosine, deoxyadenosine, adenosine, guanosine, and inosine (PubMed:11786017, PubMed:21672603, PubMed:235429, PubMed:30337572). Does not act on xanthosine (Probable). May also catalyze a phosphate-dependent transfer of the pentose moiety from one purine base to another (PubMed:235429).</text>
</comment>
<comment type="catalytic activity">
    <reaction evidence="1">
        <text>a purine D-ribonucleoside + phosphate = a purine nucleobase + alpha-D-ribose 1-phosphate</text>
        <dbReference type="Rhea" id="RHEA:19805"/>
        <dbReference type="ChEBI" id="CHEBI:26386"/>
        <dbReference type="ChEBI" id="CHEBI:43474"/>
        <dbReference type="ChEBI" id="CHEBI:57720"/>
        <dbReference type="ChEBI" id="CHEBI:142355"/>
        <dbReference type="EC" id="2.4.2.1"/>
    </reaction>
</comment>
<comment type="catalytic activity">
    <reaction evidence="1">
        <text>a purine 2'-deoxy-D-ribonucleoside + phosphate = a purine nucleobase + 2-deoxy-alpha-D-ribose 1-phosphate</text>
        <dbReference type="Rhea" id="RHEA:36431"/>
        <dbReference type="ChEBI" id="CHEBI:26386"/>
        <dbReference type="ChEBI" id="CHEBI:43474"/>
        <dbReference type="ChEBI" id="CHEBI:57259"/>
        <dbReference type="ChEBI" id="CHEBI:142361"/>
        <dbReference type="EC" id="2.4.2.1"/>
    </reaction>
</comment>
<comment type="catalytic activity">
    <reaction evidence="4 5 10">
        <text>inosine + phosphate = alpha-D-ribose 1-phosphate + hypoxanthine</text>
        <dbReference type="Rhea" id="RHEA:27646"/>
        <dbReference type="ChEBI" id="CHEBI:17368"/>
        <dbReference type="ChEBI" id="CHEBI:17596"/>
        <dbReference type="ChEBI" id="CHEBI:43474"/>
        <dbReference type="ChEBI" id="CHEBI:57720"/>
        <dbReference type="EC" id="2.4.2.1"/>
    </reaction>
    <physiologicalReaction direction="left-to-right" evidence="5">
        <dbReference type="Rhea" id="RHEA:27647"/>
    </physiologicalReaction>
    <physiologicalReaction direction="right-to-left" evidence="5">
        <dbReference type="Rhea" id="RHEA:27648"/>
    </physiologicalReaction>
</comment>
<comment type="catalytic activity">
    <reaction evidence="4 5 6">
        <text>adenosine + phosphate = alpha-D-ribose 1-phosphate + adenine</text>
        <dbReference type="Rhea" id="RHEA:27642"/>
        <dbReference type="ChEBI" id="CHEBI:16335"/>
        <dbReference type="ChEBI" id="CHEBI:16708"/>
        <dbReference type="ChEBI" id="CHEBI:43474"/>
        <dbReference type="ChEBI" id="CHEBI:57720"/>
        <dbReference type="EC" id="2.4.2.1"/>
    </reaction>
</comment>
<comment type="catalytic activity">
    <reaction evidence="4 5">
        <text>guanosine + phosphate = alpha-D-ribose 1-phosphate + guanine</text>
        <dbReference type="Rhea" id="RHEA:13233"/>
        <dbReference type="ChEBI" id="CHEBI:16235"/>
        <dbReference type="ChEBI" id="CHEBI:16750"/>
        <dbReference type="ChEBI" id="CHEBI:43474"/>
        <dbReference type="ChEBI" id="CHEBI:57720"/>
        <dbReference type="EC" id="2.4.2.1"/>
    </reaction>
</comment>
<comment type="catalytic activity">
    <reaction evidence="5">
        <text>2'-deoxyadenosine + phosphate = 2-deoxy-alpha-D-ribose 1-phosphate + adenine</text>
        <dbReference type="Rhea" id="RHEA:27742"/>
        <dbReference type="ChEBI" id="CHEBI:16708"/>
        <dbReference type="ChEBI" id="CHEBI:17256"/>
        <dbReference type="ChEBI" id="CHEBI:43474"/>
        <dbReference type="ChEBI" id="CHEBI:57259"/>
        <dbReference type="EC" id="2.4.2.1"/>
    </reaction>
</comment>
<comment type="catalytic activity">
    <reaction evidence="5">
        <text>2'-deoxyguanosine + phosphate = 2-deoxy-alpha-D-ribose 1-phosphate + guanine</text>
        <dbReference type="Rhea" id="RHEA:27738"/>
        <dbReference type="ChEBI" id="CHEBI:16235"/>
        <dbReference type="ChEBI" id="CHEBI:17172"/>
        <dbReference type="ChEBI" id="CHEBI:43474"/>
        <dbReference type="ChEBI" id="CHEBI:57259"/>
        <dbReference type="EC" id="2.4.2.1"/>
    </reaction>
</comment>
<comment type="catalytic activity">
    <reaction evidence="5">
        <text>2'-deoxyinosine + phosphate = 2-deoxy-alpha-D-ribose 1-phosphate + hypoxanthine</text>
        <dbReference type="Rhea" id="RHEA:27750"/>
        <dbReference type="ChEBI" id="CHEBI:17368"/>
        <dbReference type="ChEBI" id="CHEBI:28997"/>
        <dbReference type="ChEBI" id="CHEBI:43474"/>
        <dbReference type="ChEBI" id="CHEBI:57259"/>
        <dbReference type="EC" id="2.4.2.1"/>
    </reaction>
</comment>
<comment type="biophysicochemical properties">
    <kinetics>
        <KM evidence="6">230 uM for phosphate (at 25 degrees Celsius and pH 7)</KM>
        <KM evidence="6">520 uM for phosphate (at 25 degrees Celsius and pH 5.3)</KM>
        <KM evidence="5">120 uM for phosphate (at pH 7.1)</KM>
        <KM evidence="5">70 uM for inosine (at pH 7.1)</KM>
        <KM evidence="5">180 uM for deoxyinosine (at pH 7.1)</KM>
        <KM evidence="5">40 uM for ribose-1-phosphate (at pH 7.1)</KM>
        <KM evidence="5">100 uM for deoxyribose-1-phosphate (at pH 7.1)</KM>
        <KM evidence="5">40 uM for adenine (at pH 7.1)</KM>
        <KM evidence="6">28 uM for adenosine (at 25 degrees Celsius and pH 7)</KM>
        <Vmax evidence="6">20.8 umol/min/mg enzyme toward phosphate (at 25 degrees Celsius and pH 7)</Vmax>
        <Vmax evidence="6">3.5 umol/min/mg enzyme toward phosphate (at 25 degrees Celsius and pH 5.3)</Vmax>
        <Vmax evidence="6">51.1 umol/min/mg enzyme toward adenosine (at 25 degrees Celsius and pH 7)</Vmax>
        <Vmax evidence="5">66.0 umol/min/mg enzyme toward phosphate (at pH 7.1)</Vmax>
        <Vmax evidence="5">230.0 umol/min/mg enzyme toward inosine (at pH 7.1)</Vmax>
        <Vmax evidence="5">605.0 umol/min/mg enzyme toward deoxyinosine (at pH 7.1)</Vmax>
        <Vmax evidence="5">342.0 umol/min/mg enzyme toward ribose-1-phosphate (at pH 7.1)</Vmax>
        <Vmax evidence="5">565.0 umol/min/mg enzyme toward deoxyribose-1-phosphate (at pH 7.1)</Vmax>
        <Vmax evidence="5">583.0 umol/min/mg enzyme toward adenine (with ribose-1-phosphate as cosubstrate and at pH 7.1)</Vmax>
        <Vmax evidence="5">880.0 umol/min/mg enzyme toward adenine (with deoxyribose-1-phosphate as cosubstrate and at pH 7.1)</Vmax>
    </kinetics>
    <phDependence>
        <text evidence="5">Optimum pH is 7.1 for deoxyinosine as substrate (PubMed:235429). Optimum pH is 7.5 for inosine as substrate (PubMed:235429). Optimum pH is 8.2 for hypoxanthine as substrate (PubMed:235429).</text>
    </phDependence>
</comment>
<comment type="subunit">
    <text evidence="1 2 4 5 6 8">Homohexamer; trimer of homodimers.</text>
</comment>
<comment type="interaction">
    <interactant intactId="EBI-907568">
        <id>P0ABP8</id>
    </interactant>
    <interactant intactId="EBI-907568">
        <id>P0ABP8</id>
        <label>deoD</label>
    </interactant>
    <organismsDiffer>false</organismsDiffer>
    <experiments>7</experiments>
</comment>
<comment type="similarity">
    <text evidence="1 9">Belongs to the PNP/UDP phosphorylase family.</text>
</comment>
<name>DEOD_ECOLI</name>
<protein>
    <recommendedName>
        <fullName evidence="1">Purine nucleoside phosphorylase DeoD-type</fullName>
        <shortName evidence="1">PNP</shortName>
        <ecNumber evidence="1 2 4 5 6">2.4.2.1</ecNumber>
    </recommendedName>
</protein>
<sequence>MATPHINAEMGDFADVVLMPGDPLRAKYIAETFLEDAREVNNVRGMLGFTGTYKGRKISVMGHGMGIPSCSIYTKELITDFGVKKIIRVGSCGAVLPHVKLRDVVIGMGACTDSKVNRIRFKDHDFAAIADFDMVRNAVDAAKALGIDARVGNLFSADLFYSPDGEMFDVMEKYGILGVEMEAAGIYGVAAEFGAKALTICTVSDHIRTHEQTTAAERQTTFNDMIKIALESVLLGDKE</sequence>
<proteinExistence type="evidence at protein level"/>
<gene>
    <name evidence="1" type="primary">deoD</name>
    <name type="synonym">pup</name>
    <name type="ordered locus">b4384</name>
    <name type="ordered locus">JW4347</name>
</gene>
<accession>P0ABP8</accession>
<accession>P09743</accession>
<accession>Q2M5T3</accession>
<organism>
    <name type="scientific">Escherichia coli (strain K12)</name>
    <dbReference type="NCBI Taxonomy" id="83333"/>
    <lineage>
        <taxon>Bacteria</taxon>
        <taxon>Pseudomonadati</taxon>
        <taxon>Pseudomonadota</taxon>
        <taxon>Gammaproteobacteria</taxon>
        <taxon>Enterobacterales</taxon>
        <taxon>Enterobacteriaceae</taxon>
        <taxon>Escherichia</taxon>
    </lineage>
</organism>
<dbReference type="EC" id="2.4.2.1" evidence="1 2 4 5 6"/>
<dbReference type="EMBL" id="M60917">
    <property type="protein sequence ID" value="AAA24401.1"/>
    <property type="molecule type" value="Genomic_DNA"/>
</dbReference>
<dbReference type="EMBL" id="U14003">
    <property type="protein sequence ID" value="AAA97280.1"/>
    <property type="molecule type" value="Genomic_DNA"/>
</dbReference>
<dbReference type="EMBL" id="U00096">
    <property type="protein sequence ID" value="AAC77337.1"/>
    <property type="molecule type" value="Genomic_DNA"/>
</dbReference>
<dbReference type="EMBL" id="AP009048">
    <property type="protein sequence ID" value="BAE78373.1"/>
    <property type="molecule type" value="Genomic_DNA"/>
</dbReference>
<dbReference type="EMBL" id="X05629">
    <property type="protein sequence ID" value="CAA29114.1"/>
    <property type="molecule type" value="Genomic_DNA"/>
</dbReference>
<dbReference type="PIR" id="A41143">
    <property type="entry name" value="A27854"/>
</dbReference>
<dbReference type="RefSeq" id="NP_418801.1">
    <property type="nucleotide sequence ID" value="NC_000913.3"/>
</dbReference>
<dbReference type="RefSeq" id="WP_000224877.1">
    <property type="nucleotide sequence ID" value="NZ_STEB01000033.1"/>
</dbReference>
<dbReference type="PDB" id="1A69">
    <property type="method" value="X-ray"/>
    <property type="resolution" value="2.10 A"/>
    <property type="chains" value="A/B/C=2-239"/>
</dbReference>
<dbReference type="PDB" id="1ECP">
    <property type="method" value="X-ray"/>
    <property type="resolution" value="2.00 A"/>
    <property type="chains" value="A/B/C/D/E/F=2-239"/>
</dbReference>
<dbReference type="PDB" id="1K9S">
    <property type="method" value="X-ray"/>
    <property type="resolution" value="2.00 A"/>
    <property type="chains" value="A/B/C/D/E/F=2-238"/>
</dbReference>
<dbReference type="PDB" id="1OTX">
    <property type="method" value="X-ray"/>
    <property type="resolution" value="2.70 A"/>
    <property type="chains" value="A/B/C=2-239"/>
</dbReference>
<dbReference type="PDB" id="1OTY">
    <property type="method" value="X-ray"/>
    <property type="resolution" value="2.50 A"/>
    <property type="chains" value="A/B/C=2-239"/>
</dbReference>
<dbReference type="PDB" id="1OU4">
    <property type="method" value="X-ray"/>
    <property type="resolution" value="2.50 A"/>
    <property type="chains" value="A/B/C=2-239"/>
</dbReference>
<dbReference type="PDB" id="1OUM">
    <property type="method" value="X-ray"/>
    <property type="resolution" value="2.40 A"/>
    <property type="chains" value="A/B/C=2-239"/>
</dbReference>
<dbReference type="PDB" id="1OV6">
    <property type="method" value="X-ray"/>
    <property type="resolution" value="2.40 A"/>
    <property type="chains" value="A/B/C=2-239"/>
</dbReference>
<dbReference type="PDB" id="1OVG">
    <property type="method" value="X-ray"/>
    <property type="resolution" value="2.20 A"/>
    <property type="chains" value="A/B/C=2-239"/>
</dbReference>
<dbReference type="PDB" id="3ONV">
    <property type="method" value="X-ray"/>
    <property type="resolution" value="1.89 A"/>
    <property type="chains" value="A/B/C=2-238"/>
</dbReference>
<dbReference type="PDB" id="3OOE">
    <property type="method" value="X-ray"/>
    <property type="resolution" value="2.00 A"/>
    <property type="chains" value="A/B/C/D/E/F=2-238"/>
</dbReference>
<dbReference type="PDB" id="3OOH">
    <property type="method" value="X-ray"/>
    <property type="resolution" value="2.90 A"/>
    <property type="chains" value="A/B/C/D/E/F/G/H/I/J/K/L/M/N/O/P/Q/R=2-238"/>
</dbReference>
<dbReference type="PDB" id="3OPV">
    <property type="method" value="X-ray"/>
    <property type="resolution" value="2.40 A"/>
    <property type="chains" value="A/B/C/D/E/F/G/H/I/J/K/L=2-238"/>
</dbReference>
<dbReference type="PDB" id="3UT6">
    <property type="method" value="X-ray"/>
    <property type="resolution" value="1.90 A"/>
    <property type="chains" value="A/B/C=2-238"/>
</dbReference>
<dbReference type="PDB" id="4TS3">
    <property type="method" value="X-ray"/>
    <property type="resolution" value="2.30 A"/>
    <property type="chains" value="A/B/C/D/E/F=2-238"/>
</dbReference>
<dbReference type="PDB" id="4TS9">
    <property type="method" value="X-ray"/>
    <property type="resolution" value="1.77 A"/>
    <property type="chains" value="A/B/C=2-238"/>
</dbReference>
<dbReference type="PDB" id="4TTA">
    <property type="method" value="X-ray"/>
    <property type="resolution" value="2.00 A"/>
    <property type="chains" value="A/B/C/D/E/F=2-238"/>
</dbReference>
<dbReference type="PDB" id="4TTI">
    <property type="method" value="X-ray"/>
    <property type="resolution" value="1.89 A"/>
    <property type="chains" value="A/B/C/D/E/F=2-238"/>
</dbReference>
<dbReference type="PDB" id="4TTJ">
    <property type="method" value="X-ray"/>
    <property type="resolution" value="1.87 A"/>
    <property type="chains" value="A/B/D=2-238"/>
</dbReference>
<dbReference type="PDB" id="5I3C">
    <property type="method" value="X-ray"/>
    <property type="resolution" value="2.32 A"/>
    <property type="chains" value="A/B/C=2-238"/>
</dbReference>
<dbReference type="PDB" id="5IU6">
    <property type="method" value="X-ray"/>
    <property type="resolution" value="2.51 A"/>
    <property type="chains" value="A/B/C=2-238"/>
</dbReference>
<dbReference type="PDB" id="6XZ2">
    <property type="method" value="X-ray"/>
    <property type="resolution" value="1.65 A"/>
    <property type="chains" value="A/B/C=2-238"/>
</dbReference>
<dbReference type="PDB" id="9FPE">
    <property type="method" value="X-ray"/>
    <property type="resolution" value="1.35 A"/>
    <property type="chains" value="A/B/C=1-239"/>
</dbReference>
<dbReference type="PDB" id="9FXE">
    <property type="method" value="X-ray"/>
    <property type="resolution" value="2.12 A"/>
    <property type="chains" value="A/B/C=1-239"/>
</dbReference>
<dbReference type="PDBsum" id="1A69"/>
<dbReference type="PDBsum" id="1ECP"/>
<dbReference type="PDBsum" id="1K9S"/>
<dbReference type="PDBsum" id="1OTX"/>
<dbReference type="PDBsum" id="1OTY"/>
<dbReference type="PDBsum" id="1OU4"/>
<dbReference type="PDBsum" id="1OUM"/>
<dbReference type="PDBsum" id="1OV6"/>
<dbReference type="PDBsum" id="1OVG"/>
<dbReference type="PDBsum" id="3ONV"/>
<dbReference type="PDBsum" id="3OOE"/>
<dbReference type="PDBsum" id="3OOH"/>
<dbReference type="PDBsum" id="3OPV"/>
<dbReference type="PDBsum" id="3UT6"/>
<dbReference type="PDBsum" id="4TS3"/>
<dbReference type="PDBsum" id="4TS9"/>
<dbReference type="PDBsum" id="4TTA"/>
<dbReference type="PDBsum" id="4TTI"/>
<dbReference type="PDBsum" id="4TTJ"/>
<dbReference type="PDBsum" id="5I3C"/>
<dbReference type="PDBsum" id="5IU6"/>
<dbReference type="PDBsum" id="6XZ2"/>
<dbReference type="PDBsum" id="9FPE"/>
<dbReference type="PDBsum" id="9FXE"/>
<dbReference type="SMR" id="P0ABP8"/>
<dbReference type="BioGRID" id="4263006">
    <property type="interactions" value="12"/>
</dbReference>
<dbReference type="DIP" id="DIP-36195N"/>
<dbReference type="FunCoup" id="P0ABP8">
    <property type="interactions" value="463"/>
</dbReference>
<dbReference type="IntAct" id="P0ABP8">
    <property type="interactions" value="2"/>
</dbReference>
<dbReference type="MINT" id="P0ABP8"/>
<dbReference type="STRING" id="511145.b4384"/>
<dbReference type="DrugBank" id="DB02947">
    <property type="generic name" value="2-Fluoro-2'-Deoxyadenosine"/>
</dbReference>
<dbReference type="DrugBank" id="DB04441">
    <property type="generic name" value="2-Fluoroadenosine"/>
</dbReference>
<dbReference type="DrugBank" id="DB03986">
    <property type="generic name" value="6-methyl-formycin A"/>
</dbReference>
<dbReference type="DrugBank" id="DB02113">
    <property type="generic name" value="6-Methylpurine"/>
</dbReference>
<dbReference type="DrugBank" id="DB03735">
    <property type="generic name" value="9-(2-Deoxy-Beta-D-Ribofuranosyl)-6-Methylpurine"/>
</dbReference>
<dbReference type="DrugBank" id="DB02934">
    <property type="generic name" value="9-(6-deoxy-alpha-L-talofuranosyl)-6-methylpurine"/>
</dbReference>
<dbReference type="DrugBank" id="DB03952">
    <property type="generic name" value="9-(6-deoxy-beta-D-allofuranosyl)-6-methylpurine"/>
</dbReference>
<dbReference type="DrugBank" id="DB03528">
    <property type="generic name" value="9-Beta-D-Xylofuranosyl-Adenine"/>
</dbReference>
<dbReference type="DrugBank" id="DB04198">
    <property type="generic name" value="Formycin B"/>
</dbReference>
<dbReference type="DrugBank" id="DB04335">
    <property type="generic name" value="Inosine"/>
</dbReference>
<dbReference type="DrugBank" id="DB02896">
    <property type="generic name" value="Methylthioinosine"/>
</dbReference>
<dbReference type="DrugBank" id="DB02066">
    <property type="generic name" value="N7-Methyl-Formycin A"/>
</dbReference>
<dbReference type="DrugBank" id="DB03172">
    <property type="generic name" value="Tubercidin"/>
</dbReference>
<dbReference type="iPTMnet" id="P0ABP8"/>
<dbReference type="jPOST" id="P0ABP8"/>
<dbReference type="PaxDb" id="511145-b4384"/>
<dbReference type="EnsemblBacteria" id="AAC77337">
    <property type="protein sequence ID" value="AAC77337"/>
    <property type="gene ID" value="b4384"/>
</dbReference>
<dbReference type="GeneID" id="93777460"/>
<dbReference type="GeneID" id="945654"/>
<dbReference type="KEGG" id="ecj:JW4347"/>
<dbReference type="KEGG" id="eco:b4384"/>
<dbReference type="KEGG" id="ecoc:C3026_23690"/>
<dbReference type="PATRIC" id="fig|1411691.4.peg.2301"/>
<dbReference type="EchoBASE" id="EB0218"/>
<dbReference type="eggNOG" id="COG0813">
    <property type="taxonomic scope" value="Bacteria"/>
</dbReference>
<dbReference type="HOGENOM" id="CLU_068457_2_0_6"/>
<dbReference type="InParanoid" id="P0ABP8"/>
<dbReference type="OMA" id="PQCLLCG"/>
<dbReference type="OrthoDB" id="9782889at2"/>
<dbReference type="PhylomeDB" id="P0ABP8"/>
<dbReference type="BioCyc" id="EcoCyc:DEOD-MONOMER"/>
<dbReference type="BioCyc" id="MetaCyc:DEOD-MONOMER"/>
<dbReference type="BRENDA" id="2.4.2.1">
    <property type="organism ID" value="2026"/>
</dbReference>
<dbReference type="EvolutionaryTrace" id="P0ABP8"/>
<dbReference type="PRO" id="PR:P0ABP8"/>
<dbReference type="Proteomes" id="UP000000625">
    <property type="component" value="Chromosome"/>
</dbReference>
<dbReference type="GO" id="GO:0005829">
    <property type="term" value="C:cytosol"/>
    <property type="evidence" value="ECO:0000314"/>
    <property type="project" value="EcoCyc"/>
</dbReference>
<dbReference type="GO" id="GO:0016020">
    <property type="term" value="C:membrane"/>
    <property type="evidence" value="ECO:0007005"/>
    <property type="project" value="UniProtKB"/>
</dbReference>
<dbReference type="GO" id="GO:0047975">
    <property type="term" value="F:guanosine phosphorylase activity"/>
    <property type="evidence" value="ECO:0007669"/>
    <property type="project" value="RHEA"/>
</dbReference>
<dbReference type="GO" id="GO:0042802">
    <property type="term" value="F:identical protein binding"/>
    <property type="evidence" value="ECO:0000353"/>
    <property type="project" value="IntAct"/>
</dbReference>
<dbReference type="GO" id="GO:0004731">
    <property type="term" value="F:purine-nucleoside phosphorylase activity"/>
    <property type="evidence" value="ECO:0000314"/>
    <property type="project" value="UniProtKB"/>
</dbReference>
<dbReference type="GO" id="GO:0006974">
    <property type="term" value="P:DNA damage response"/>
    <property type="evidence" value="ECO:0000270"/>
    <property type="project" value="EcoliWiki"/>
</dbReference>
<dbReference type="GO" id="GO:0006152">
    <property type="term" value="P:purine nucleoside catabolic process"/>
    <property type="evidence" value="ECO:0000315"/>
    <property type="project" value="EcoCyc"/>
</dbReference>
<dbReference type="GO" id="GO:0019686">
    <property type="term" value="P:purine nucleoside interconversion"/>
    <property type="evidence" value="ECO:0000314"/>
    <property type="project" value="EcoCyc"/>
</dbReference>
<dbReference type="CDD" id="cd09006">
    <property type="entry name" value="PNP_EcPNPI-like"/>
    <property type="match status" value="1"/>
</dbReference>
<dbReference type="FunFam" id="3.40.50.1580:FF:000002">
    <property type="entry name" value="Purine nucleoside phosphorylase DeoD-type"/>
    <property type="match status" value="1"/>
</dbReference>
<dbReference type="Gene3D" id="3.40.50.1580">
    <property type="entry name" value="Nucleoside phosphorylase domain"/>
    <property type="match status" value="1"/>
</dbReference>
<dbReference type="HAMAP" id="MF_01627">
    <property type="entry name" value="Pur_nucleosid_phosp"/>
    <property type="match status" value="1"/>
</dbReference>
<dbReference type="InterPro" id="IPR004402">
    <property type="entry name" value="DeoD-type"/>
</dbReference>
<dbReference type="InterPro" id="IPR018016">
    <property type="entry name" value="Nucleoside_phosphorylase_CS"/>
</dbReference>
<dbReference type="InterPro" id="IPR000845">
    <property type="entry name" value="Nucleoside_phosphorylase_d"/>
</dbReference>
<dbReference type="InterPro" id="IPR035994">
    <property type="entry name" value="Nucleoside_phosphorylase_sf"/>
</dbReference>
<dbReference type="NCBIfam" id="TIGR00107">
    <property type="entry name" value="deoD"/>
    <property type="match status" value="1"/>
</dbReference>
<dbReference type="NCBIfam" id="NF004489">
    <property type="entry name" value="PRK05819.1"/>
    <property type="match status" value="1"/>
</dbReference>
<dbReference type="NCBIfam" id="NF009914">
    <property type="entry name" value="PRK13374.1"/>
    <property type="match status" value="1"/>
</dbReference>
<dbReference type="PANTHER" id="PTHR43691:SF2">
    <property type="entry name" value="PURINE NUCLEOSIDE PHOSPHORYLASE DEOD-TYPE"/>
    <property type="match status" value="1"/>
</dbReference>
<dbReference type="PANTHER" id="PTHR43691">
    <property type="entry name" value="URIDINE PHOSPHORYLASE"/>
    <property type="match status" value="1"/>
</dbReference>
<dbReference type="Pfam" id="PF01048">
    <property type="entry name" value="PNP_UDP_1"/>
    <property type="match status" value="1"/>
</dbReference>
<dbReference type="SUPFAM" id="SSF53167">
    <property type="entry name" value="Purine and uridine phosphorylases"/>
    <property type="match status" value="1"/>
</dbReference>
<dbReference type="PROSITE" id="PS01232">
    <property type="entry name" value="PNP_UDP_1"/>
    <property type="match status" value="1"/>
</dbReference>
<feature type="initiator methionine" description="Removed" evidence="7">
    <location>
        <position position="1"/>
    </location>
</feature>
<feature type="chain" id="PRO_0000063130" description="Purine nucleoside phosphorylase DeoD-type">
    <location>
        <begin position="2"/>
        <end position="239"/>
    </location>
</feature>
<feature type="active site" description="Proton donor" evidence="1 6">
    <location>
        <position position="205"/>
    </location>
</feature>
<feature type="binding site" evidence="12 18 19 20 21 22">
    <location>
        <position position="5"/>
    </location>
    <ligand>
        <name>a purine D-ribonucleoside</name>
        <dbReference type="ChEBI" id="CHEBI:142355"/>
        <note>ligand shared between dimeric partners</note>
    </ligand>
</feature>
<feature type="binding site" description="in other chain" evidence="2 4 6 13 14 15 16 17 18 19 20 21 22">
    <location>
        <position position="21"/>
    </location>
    <ligand>
        <name>phosphate</name>
        <dbReference type="ChEBI" id="CHEBI:43474"/>
        <note>ligand shared between dimeric partners</note>
    </ligand>
</feature>
<feature type="binding site" description="in other chain" evidence="2 4 6 13 14 15 16 17 18 19 20 21 22">
    <location>
        <position position="25"/>
    </location>
    <ligand>
        <name>phosphate</name>
        <dbReference type="ChEBI" id="CHEBI:43474"/>
        <note>ligand shared between dimeric partners</note>
    </ligand>
</feature>
<feature type="binding site" evidence="2 4 6 13 14 15 16 17 18 19 20 21 22">
    <location>
        <position position="44"/>
    </location>
    <ligand>
        <name>phosphate</name>
        <dbReference type="ChEBI" id="CHEBI:43474"/>
        <note>ligand shared between dimeric partners</note>
    </ligand>
</feature>
<feature type="binding site" description="in other chain" evidence="2 4 6 13 14 15 16 17 18 19 20 21 22">
    <location>
        <begin position="88"/>
        <end position="91"/>
    </location>
    <ligand>
        <name>phosphate</name>
        <dbReference type="ChEBI" id="CHEBI:43474"/>
        <note>ligand shared between dimeric partners</note>
    </ligand>
</feature>
<feature type="binding site" description="in other chain" evidence="12 18 19 20 21 22">
    <location>
        <begin position="180"/>
        <end position="182"/>
    </location>
    <ligand>
        <name>a purine D-ribonucleoside</name>
        <dbReference type="ChEBI" id="CHEBI:142355"/>
        <note>ligand shared between dimeric partners</note>
    </ligand>
</feature>
<feature type="binding site" description="in other chain" evidence="12 18 19 20 21 22">
    <location>
        <begin position="204"/>
        <end position="205"/>
    </location>
    <ligand>
        <name>a purine D-ribonucleoside</name>
        <dbReference type="ChEBI" id="CHEBI:142355"/>
        <note>ligand shared between dimeric partners</note>
    </ligand>
</feature>
<feature type="site" description="Important for catalytic activity" evidence="1 4 6">
    <location>
        <position position="218"/>
    </location>
</feature>
<feature type="modified residue" description="N6-acetyllysine" evidence="3">
    <location>
        <position position="27"/>
    </location>
</feature>
<feature type="mutagenesis site" description="Severe loss of catalytic activity. 20-fold decrease in affinity for phosphate." evidence="4">
    <original>R</original>
    <variation>A</variation>
    <location>
        <position position="25"/>
    </location>
</feature>
<feature type="mutagenesis site" description="Severe loss of catalytic activity." evidence="4 6">
    <original>D</original>
    <variation>A</variation>
    <variation>N</variation>
    <location>
        <position position="205"/>
    </location>
</feature>
<feature type="mutagenesis site" description="Severe loss of catalytic activity." evidence="4 6">
    <original>R</original>
    <variation>A</variation>
    <location>
        <position position="218"/>
    </location>
</feature>
<feature type="strand" evidence="25">
    <location>
        <begin position="15"/>
        <end position="19"/>
    </location>
</feature>
<feature type="helix" evidence="25">
    <location>
        <begin position="24"/>
        <end position="33"/>
    </location>
</feature>
<feature type="strand" evidence="25">
    <location>
        <begin position="35"/>
        <end position="41"/>
    </location>
</feature>
<feature type="helix" evidence="25">
    <location>
        <begin position="43"/>
        <end position="45"/>
    </location>
</feature>
<feature type="strand" evidence="25">
    <location>
        <begin position="48"/>
        <end position="53"/>
    </location>
</feature>
<feature type="strand" evidence="25">
    <location>
        <begin position="56"/>
        <end position="61"/>
    </location>
</feature>
<feature type="helix" evidence="25">
    <location>
        <begin position="67"/>
        <end position="80"/>
    </location>
</feature>
<feature type="strand" evidence="25">
    <location>
        <begin position="85"/>
        <end position="94"/>
    </location>
</feature>
<feature type="strand" evidence="23">
    <location>
        <begin position="96"/>
        <end position="99"/>
    </location>
</feature>
<feature type="strand" evidence="25">
    <location>
        <begin position="104"/>
        <end position="113"/>
    </location>
</feature>
<feature type="helix" evidence="25">
    <location>
        <begin position="116"/>
        <end position="120"/>
    </location>
</feature>
<feature type="turn" evidence="25">
    <location>
        <begin position="121"/>
        <end position="123"/>
    </location>
</feature>
<feature type="helix" evidence="25">
    <location>
        <begin position="132"/>
        <end position="144"/>
    </location>
</feature>
<feature type="strand" evidence="25">
    <location>
        <begin position="149"/>
        <end position="156"/>
    </location>
</feature>
<feature type="helix" evidence="25">
    <location>
        <begin position="166"/>
        <end position="173"/>
    </location>
</feature>
<feature type="strand" evidence="25">
    <location>
        <begin position="178"/>
        <end position="182"/>
    </location>
</feature>
<feature type="helix" evidence="25">
    <location>
        <begin position="183"/>
        <end position="193"/>
    </location>
</feature>
<feature type="strand" evidence="25">
    <location>
        <begin position="196"/>
        <end position="206"/>
    </location>
</feature>
<feature type="turn" evidence="24">
    <location>
        <begin position="207"/>
        <end position="209"/>
    </location>
</feature>
<feature type="helix" evidence="25">
    <location>
        <begin position="215"/>
        <end position="236"/>
    </location>
</feature>
<reference key="1">
    <citation type="journal article" date="1991" name="Proc. Natl. Acad. Sci. U.S.A.">
        <title>Use of site-directed mutagenesis to enhance the epitope-shielding effect of covalent modification of proteins with polyethylene glycol.</title>
        <authorList>
            <person name="Hershfield M.S."/>
            <person name="Chaffee S."/>
            <person name="Koro-Johnson L."/>
            <person name="Mary A."/>
            <person name="Smith A.A."/>
            <person name="Short S.A."/>
        </authorList>
    </citation>
    <scope>NUCLEOTIDE SEQUENCE [GENOMIC DNA]</scope>
    <source>
        <strain>K12</strain>
    </source>
</reference>
<reference key="2">
    <citation type="journal article" date="1995" name="Nucleic Acids Res.">
        <title>Analysis of the Escherichia coli genome VI: DNA sequence of the region from 92.8 through 100 minutes.</title>
        <authorList>
            <person name="Burland V.D."/>
            <person name="Plunkett G. III"/>
            <person name="Sofia H.J."/>
            <person name="Daniels D.L."/>
            <person name="Blattner F.R."/>
        </authorList>
    </citation>
    <scope>NUCLEOTIDE SEQUENCE [LARGE SCALE GENOMIC DNA]</scope>
    <source>
        <strain>K12 / MG1655 / ATCC 47076</strain>
    </source>
</reference>
<reference key="3">
    <citation type="journal article" date="1997" name="Science">
        <title>The complete genome sequence of Escherichia coli K-12.</title>
        <authorList>
            <person name="Blattner F.R."/>
            <person name="Plunkett G. III"/>
            <person name="Bloch C.A."/>
            <person name="Perna N.T."/>
            <person name="Burland V."/>
            <person name="Riley M."/>
            <person name="Collado-Vides J."/>
            <person name="Glasner J.D."/>
            <person name="Rode C.K."/>
            <person name="Mayhew G.F."/>
            <person name="Gregor J."/>
            <person name="Davis N.W."/>
            <person name="Kirkpatrick H.A."/>
            <person name="Goeden M.A."/>
            <person name="Rose D.J."/>
            <person name="Mau B."/>
            <person name="Shao Y."/>
        </authorList>
    </citation>
    <scope>NUCLEOTIDE SEQUENCE [LARGE SCALE GENOMIC DNA]</scope>
    <source>
        <strain>K12 / MG1655 / ATCC 47076</strain>
    </source>
</reference>
<reference key="4">
    <citation type="journal article" date="2006" name="Mol. Syst. Biol.">
        <title>Highly accurate genome sequences of Escherichia coli K-12 strains MG1655 and W3110.</title>
        <authorList>
            <person name="Hayashi K."/>
            <person name="Morooka N."/>
            <person name="Yamamoto Y."/>
            <person name="Fujita K."/>
            <person name="Isono K."/>
            <person name="Choi S."/>
            <person name="Ohtsubo E."/>
            <person name="Baba T."/>
            <person name="Wanner B.L."/>
            <person name="Mori H."/>
            <person name="Horiuchi T."/>
        </authorList>
    </citation>
    <scope>NUCLEOTIDE SEQUENCE [LARGE SCALE GENOMIC DNA]</scope>
    <source>
        <strain>K12 / W3110 / ATCC 27325 / DSM 5911</strain>
    </source>
</reference>
<reference key="5">
    <citation type="journal article" date="1993" name="Proc. Natl. Acad. Sci. U.S.A.">
        <title>Identifying proteins from two-dimensional gels by molecular mass searching of peptide fragments in protein sequence databases.</title>
        <authorList>
            <person name="Henzel W.J."/>
            <person name="Billeci T.M."/>
            <person name="Stults J.T."/>
            <person name="Wong S.C."/>
            <person name="Grimley C."/>
            <person name="Watanabe C."/>
        </authorList>
    </citation>
    <scope>PROTEIN SEQUENCE OF 2-21</scope>
</reference>
<reference key="6">
    <citation type="journal article" date="1987" name="Nucleic Acids Res.">
        <title>Analysis of the terminator region after the deoCABD operon of Escherichia coli K-12 using a new class of single copy number operon-fusion vectors.</title>
        <authorList>
            <person name="Larsen J.E.L."/>
            <person name="Albrechtsen B."/>
            <person name="Valentin-Hansen P."/>
        </authorList>
    </citation>
    <scope>NUCLEOTIDE SEQUENCE [GENOMIC DNA] OF 225-239</scope>
    <source>
        <strain>K12</strain>
    </source>
</reference>
<reference key="7">
    <citation type="journal article" date="1975" name="Eur. J. Biochem.">
        <title>Purine nucleoside phosphorylase from Escherichia coli and Salmonella typhimurium. Purification and some properties.</title>
        <authorList>
            <person name="Jensen K.F."/>
            <person name="Nygaard P."/>
        </authorList>
    </citation>
    <scope>FUNCTION</scope>
    <scope>CATALYTIC ACTIVITY</scope>
    <scope>BIOPHYSICOCHEMICAL PROPERTIES</scope>
    <scope>SUBUNIT</scope>
</reference>
<reference key="8">
    <citation type="journal article" date="2009" name="Mol. Cell. Proteomics">
        <title>Lysine acetylation is a highly abundant and evolutionarily conserved modification in Escherichia coli.</title>
        <authorList>
            <person name="Zhang J."/>
            <person name="Sprung R."/>
            <person name="Pei J."/>
            <person name="Tan X."/>
            <person name="Kim S."/>
            <person name="Zhu H."/>
            <person name="Liu C.F."/>
            <person name="Grishin N.V."/>
            <person name="Zhao Y."/>
        </authorList>
    </citation>
    <scope>ACETYLATION [LARGE SCALE ANALYSIS] AT LYS-27</scope>
    <scope>IDENTIFICATION BY MASS SPECTROMETRY</scope>
    <source>
        <strain>K12 / JW1106</strain>
        <strain>K12 / MG1655 / ATCC 47076</strain>
    </source>
</reference>
<reference key="9">
    <citation type="journal article" date="1997" name="Structure">
        <title>The crystal structure of Escherichia coli purine nucleoside phosphorylase: a comparison with the human enzyme reveals a conserved topology.</title>
        <authorList>
            <person name="Mao C."/>
            <person name="Cook W.J."/>
            <person name="Zhou M."/>
            <person name="Koszalka G.W."/>
            <person name="Krenitsky T.A."/>
            <person name="Ealick S.E."/>
        </authorList>
    </citation>
    <scope>X-RAY CRYSTALLOGRAPHY (2.0 ANGSTROMS)</scope>
</reference>
<reference key="10">
    <citation type="journal article" date="1998" name="J. Mol. Biol.">
        <title>Crystal structure of the ternary complex of E. coli purine nucleoside phosphorylase with formycin B, a structural analogue of the substrate inosine, and phosphate (sulphate) at 2.1-A resolution.</title>
        <authorList>
            <person name="Koellner G."/>
            <person name="Luic M."/>
            <person name="Shugar D."/>
            <person name="Saenger W."/>
            <person name="Bzowska A."/>
        </authorList>
    </citation>
    <scope>X-RAY CRYSTALLOGRAPHY (2.1 ANGSTROMS)</scope>
    <scope>SUBUNIT</scope>
</reference>
<reference evidence="13" key="11">
    <citation type="journal article" date="2002" name="J. Mol. Biol.">
        <title>Open and closed conformation of the E. coli purine nucleoside phosphorylase active center and implications for the catalytic mechanism.</title>
        <authorList>
            <person name="Koellner G."/>
            <person name="Bzowska A."/>
            <person name="Wielgus-Kutrowska B."/>
            <person name="Luic M."/>
            <person name="Steiner T."/>
            <person name="Saenger W."/>
            <person name="Stepinski J."/>
        </authorList>
    </citation>
    <scope>X-RAY CRYSTALLOGRAPHY (2.00 ANGSTROMS) OF 2-238 IN COMPLEX WITH N(7)-METHYLFORMYCIN AND PHOSPHATE</scope>
    <scope>FUNCTION</scope>
    <scope>CATALYTIC ACTIVITY</scope>
    <scope>SUBUNIT</scope>
</reference>
<reference evidence="14 15 16 17" key="12">
    <citation type="journal article" date="2011" name="Biochimie">
        <title>Validation of the catalytic mechanism of Escherichia coli purine nucleoside phosphorylase by structural and kinetic studies.</title>
        <authorList>
            <person name="Mikleusevic G."/>
            <person name="Stefanic Z."/>
            <person name="Narczyk M."/>
            <person name="Wielgus-Kutrowska B."/>
            <person name="Bzowska A."/>
            <person name="Luic M."/>
        </authorList>
    </citation>
    <scope>X-RAY CRYSTALLOGRAPHY (1.89 ANGSTROMS) OF 2-238 OF WILD TYPE AND MUTANT ALA-25 IN COMPLEX WITH PHOSPHATE</scope>
    <scope>FUNCTION</scope>
    <scope>CATALYTIC ACTIVITY</scope>
    <scope>BIOPHYSICOCHEMICAL PROPERTIES</scope>
    <scope>SUBUNIT</scope>
    <scope>MUTAGENESIS OF ARG-25; ASP-205 AND ARG-218</scope>
</reference>
<reference evidence="18 19 20 21 22" key="13">
    <citation type="journal article" date="2018" name="Sci. Rep.">
        <title>Crystallographic snapshots of ligand binding to hexameric purine nucleoside phosphorylase and kinetic studies give insight into the mechanism of catalysis.</title>
        <authorList>
            <person name="Stefanic Z."/>
            <person name="Narczyk M."/>
            <person name="Mikleusevic G."/>
            <person name="Kazazic S."/>
            <person name="Bzowska A."/>
            <person name="Luic M."/>
        </authorList>
    </citation>
    <scope>X-RAY CRYSTALLOGRAPHY (1.77 ANGSTROMS) OF 2-238 IN COMPLEX WITH PHOSPHATE AND SUBSTRATE ANALOG FORMYCIN A</scope>
    <scope>FUNCTION</scope>
    <scope>CATALYTIC ACTIVITY</scope>
    <scope>BIOPHYSICOCHEMICAL PROPERTIES</scope>
    <scope>SUBUNIT</scope>
    <scope>ACTIVE SITE</scope>
    <scope>MUTAGENESIS OF ASP-205 AND ARG-218</scope>
</reference>